<comment type="function">
    <text evidence="1">Acts as a component of a complex regulating the turnover of mRNAs in the nucleus. Binds with high affinity to RNA molecules that contain U-rich sequences in 3'-UTRs. May function in complex with UBP1 and contribute to the stabilization of mRNAs in the nucleus (By similarity).</text>
</comment>
<comment type="subcellular location">
    <subcellularLocation>
        <location evidence="1">Nucleus</location>
    </subcellularLocation>
</comment>
<organism>
    <name type="scientific">Arabidopsis thaliana</name>
    <name type="common">Mouse-ear cress</name>
    <dbReference type="NCBI Taxonomy" id="3702"/>
    <lineage>
        <taxon>Eukaryota</taxon>
        <taxon>Viridiplantae</taxon>
        <taxon>Streptophyta</taxon>
        <taxon>Embryophyta</taxon>
        <taxon>Tracheophyta</taxon>
        <taxon>Spermatophyta</taxon>
        <taxon>Magnoliopsida</taxon>
        <taxon>eudicotyledons</taxon>
        <taxon>Gunneridae</taxon>
        <taxon>Pentapetalae</taxon>
        <taxon>rosids</taxon>
        <taxon>malvids</taxon>
        <taxon>Brassicales</taxon>
        <taxon>Brassicaceae</taxon>
        <taxon>Camelineae</taxon>
        <taxon>Arabidopsis</taxon>
    </lineage>
</organism>
<reference key="1">
    <citation type="journal article" date="1999" name="Nature">
        <title>Sequence and analysis of chromosome 2 of the plant Arabidopsis thaliana.</title>
        <authorList>
            <person name="Lin X."/>
            <person name="Kaul S."/>
            <person name="Rounsley S.D."/>
            <person name="Shea T.P."/>
            <person name="Benito M.-I."/>
            <person name="Town C.D."/>
            <person name="Fujii C.Y."/>
            <person name="Mason T.M."/>
            <person name="Bowman C.L."/>
            <person name="Barnstead M.E."/>
            <person name="Feldblyum T.V."/>
            <person name="Buell C.R."/>
            <person name="Ketchum K.A."/>
            <person name="Lee J.J."/>
            <person name="Ronning C.M."/>
            <person name="Koo H.L."/>
            <person name="Moffat K.S."/>
            <person name="Cronin L.A."/>
            <person name="Shen M."/>
            <person name="Pai G."/>
            <person name="Van Aken S."/>
            <person name="Umayam L."/>
            <person name="Tallon L.J."/>
            <person name="Gill J.E."/>
            <person name="Adams M.D."/>
            <person name="Carrera A.J."/>
            <person name="Creasy T.H."/>
            <person name="Goodman H.M."/>
            <person name="Somerville C.R."/>
            <person name="Copenhaver G.P."/>
            <person name="Preuss D."/>
            <person name="Nierman W.C."/>
            <person name="White O."/>
            <person name="Eisen J.A."/>
            <person name="Salzberg S.L."/>
            <person name="Fraser C.M."/>
            <person name="Venter J.C."/>
        </authorList>
    </citation>
    <scope>NUCLEOTIDE SEQUENCE [LARGE SCALE GENOMIC DNA]</scope>
    <source>
        <strain>cv. Columbia</strain>
    </source>
</reference>
<reference key="2">
    <citation type="journal article" date="2017" name="Plant J.">
        <title>Araport11: a complete reannotation of the Arabidopsis thaliana reference genome.</title>
        <authorList>
            <person name="Cheng C.Y."/>
            <person name="Krishnakumar V."/>
            <person name="Chan A.P."/>
            <person name="Thibaud-Nissen F."/>
            <person name="Schobel S."/>
            <person name="Town C.D."/>
        </authorList>
    </citation>
    <scope>GENOME REANNOTATION</scope>
    <source>
        <strain>cv. Columbia</strain>
    </source>
</reference>
<reference key="3">
    <citation type="submission" date="2002-03" db="EMBL/GenBank/DDBJ databases">
        <title>Full-length cDNA from Arabidopsis thaliana.</title>
        <authorList>
            <person name="Brover V.V."/>
            <person name="Troukhan M.E."/>
            <person name="Alexandrov N.A."/>
            <person name="Lu Y.-P."/>
            <person name="Flavell R.B."/>
            <person name="Feldmann K.A."/>
        </authorList>
    </citation>
    <scope>NUCLEOTIDE SEQUENCE [LARGE SCALE MRNA]</scope>
</reference>
<feature type="chain" id="PRO_0000425438" description="UBP1-associated proteins 1B">
    <location>
        <begin position="1"/>
        <end position="382"/>
    </location>
</feature>
<feature type="domain" description="RRM" evidence="2">
    <location>
        <begin position="163"/>
        <end position="248"/>
    </location>
</feature>
<feature type="region of interest" description="Disordered" evidence="3">
    <location>
        <begin position="1"/>
        <end position="99"/>
    </location>
</feature>
<feature type="compositionally biased region" description="Basic residues" evidence="3">
    <location>
        <begin position="10"/>
        <end position="22"/>
    </location>
</feature>
<feature type="compositionally biased region" description="Basic and acidic residues" evidence="3">
    <location>
        <begin position="23"/>
        <end position="34"/>
    </location>
</feature>
<feature type="sequence conflict" description="In Ref. 3; AAM65774." evidence="4" ref="3">
    <original>P</original>
    <variation>T</variation>
    <location>
        <position position="246"/>
    </location>
</feature>
<gene>
    <name type="primary">UBA1B</name>
    <name type="ordered locus">At2g22100</name>
    <name type="ORF">T16B14.5</name>
</gene>
<keyword id="KW-0539">Nucleus</keyword>
<keyword id="KW-1185">Reference proteome</keyword>
<keyword id="KW-0694">RNA-binding</keyword>
<evidence type="ECO:0000250" key="1"/>
<evidence type="ECO:0000255" key="2">
    <source>
        <dbReference type="PROSITE-ProRule" id="PRU00176"/>
    </source>
</evidence>
<evidence type="ECO:0000256" key="3">
    <source>
        <dbReference type="SAM" id="MobiDB-lite"/>
    </source>
</evidence>
<evidence type="ECO:0000305" key="4"/>
<sequence length="382" mass="42884">MAKEGEERKKEKKEKKERKERKRREAEELAVREKKISKKHKSKSKEEEKPEKSKKKSKKYEEVEEEEKSPSPSPSPKKSKESKKKHKRSSDESEEIVDSKPVTVPIVTIESDSDFEFDKEDIKNLLESYSKEELINLIYKTAEKGSKLISAVFESADRDSSQRNIFVRGLGWDTTHENLKAAFEVYGEITECSVVMDKDTGRAKGFGFVLFKTRKGARAALKNPEKRMYNRTVSCLPARPFNSGKPREQQQPVESVKIDLSHTGNQSEMALPGIDLGHGLDKGHQQQQNMSMYAGQNMPFYGHSQPPPGFNPMYGAMMGNPMVAGLQNYRMFGSGMMNQGPMMPPNHMGMVGQYVGDGNVNGVGAGAGAGAGFDGERAWYLR</sequence>
<accession>Q9SHZ5</accession>
<accession>Q8L9T4</accession>
<protein>
    <recommendedName>
        <fullName>UBP1-associated proteins 1B</fullName>
    </recommendedName>
</protein>
<name>UBA1B_ARATH</name>
<proteinExistence type="evidence at transcript level"/>
<dbReference type="EMBL" id="AC007232">
    <property type="protein sequence ID" value="AAD25814.2"/>
    <property type="molecule type" value="Genomic_DNA"/>
</dbReference>
<dbReference type="EMBL" id="CP002685">
    <property type="protein sequence ID" value="AEC07264.1"/>
    <property type="molecule type" value="Genomic_DNA"/>
</dbReference>
<dbReference type="EMBL" id="AY088233">
    <property type="protein sequence ID" value="AAM65774.1"/>
    <property type="molecule type" value="mRNA"/>
</dbReference>
<dbReference type="PIR" id="A84609">
    <property type="entry name" value="A84609"/>
</dbReference>
<dbReference type="RefSeq" id="NP_565526.1">
    <property type="nucleotide sequence ID" value="NM_127779.2"/>
</dbReference>
<dbReference type="SMR" id="Q9SHZ5"/>
<dbReference type="BioGRID" id="2098">
    <property type="interactions" value="2"/>
</dbReference>
<dbReference type="FunCoup" id="Q9SHZ5">
    <property type="interactions" value="35"/>
</dbReference>
<dbReference type="STRING" id="3702.Q9SHZ5"/>
<dbReference type="PaxDb" id="3702-AT2G22100.1"/>
<dbReference type="ProteomicsDB" id="228593"/>
<dbReference type="EnsemblPlants" id="AT2G22100.1">
    <property type="protein sequence ID" value="AT2G22100.1"/>
    <property type="gene ID" value="AT2G22100"/>
</dbReference>
<dbReference type="GeneID" id="816745"/>
<dbReference type="Gramene" id="AT2G22100.1">
    <property type="protein sequence ID" value="AT2G22100.1"/>
    <property type="gene ID" value="AT2G22100"/>
</dbReference>
<dbReference type="KEGG" id="ath:AT2G22100"/>
<dbReference type="Araport" id="AT2G22100"/>
<dbReference type="TAIR" id="AT2G22100"/>
<dbReference type="eggNOG" id="KOG0118">
    <property type="taxonomic scope" value="Eukaryota"/>
</dbReference>
<dbReference type="HOGENOM" id="CLU_740995_0_0_1"/>
<dbReference type="InParanoid" id="Q9SHZ5"/>
<dbReference type="OMA" id="FGPGMMN"/>
<dbReference type="OrthoDB" id="1875751at2759"/>
<dbReference type="PhylomeDB" id="Q9SHZ5"/>
<dbReference type="PRO" id="PR:Q9SHZ5"/>
<dbReference type="Proteomes" id="UP000006548">
    <property type="component" value="Chromosome 2"/>
</dbReference>
<dbReference type="ExpressionAtlas" id="Q9SHZ5">
    <property type="expression patterns" value="baseline and differential"/>
</dbReference>
<dbReference type="GO" id="GO:0005634">
    <property type="term" value="C:nucleus"/>
    <property type="evidence" value="ECO:0007669"/>
    <property type="project" value="UniProtKB-SubCell"/>
</dbReference>
<dbReference type="GO" id="GO:0003723">
    <property type="term" value="F:RNA binding"/>
    <property type="evidence" value="ECO:0007669"/>
    <property type="project" value="UniProtKB-KW"/>
</dbReference>
<dbReference type="Gene3D" id="3.30.70.330">
    <property type="match status" value="1"/>
</dbReference>
<dbReference type="InterPro" id="IPR012677">
    <property type="entry name" value="Nucleotide-bd_a/b_plait_sf"/>
</dbReference>
<dbReference type="InterPro" id="IPR035979">
    <property type="entry name" value="RBD_domain_sf"/>
</dbReference>
<dbReference type="InterPro" id="IPR050886">
    <property type="entry name" value="RNA-binding_reg"/>
</dbReference>
<dbReference type="InterPro" id="IPR000504">
    <property type="entry name" value="RRM_dom"/>
</dbReference>
<dbReference type="PANTHER" id="PTHR48024">
    <property type="entry name" value="GEO13361P1-RELATED"/>
    <property type="match status" value="1"/>
</dbReference>
<dbReference type="PANTHER" id="PTHR48024:SF9">
    <property type="entry name" value="UBP1-ASSOCIATED PROTEINS 1A-RELATED"/>
    <property type="match status" value="1"/>
</dbReference>
<dbReference type="Pfam" id="PF00076">
    <property type="entry name" value="RRM_1"/>
    <property type="match status" value="1"/>
</dbReference>
<dbReference type="SMART" id="SM00360">
    <property type="entry name" value="RRM"/>
    <property type="match status" value="1"/>
</dbReference>
<dbReference type="SUPFAM" id="SSF54928">
    <property type="entry name" value="RNA-binding domain, RBD"/>
    <property type="match status" value="1"/>
</dbReference>
<dbReference type="PROSITE" id="PS50102">
    <property type="entry name" value="RRM"/>
    <property type="match status" value="1"/>
</dbReference>